<evidence type="ECO:0000255" key="1">
    <source>
        <dbReference type="HAMAP-Rule" id="MF_00249"/>
    </source>
</evidence>
<keyword id="KW-0067">ATP-binding</keyword>
<keyword id="KW-0143">Chaperone</keyword>
<keyword id="KW-0963">Cytoplasm</keyword>
<keyword id="KW-0547">Nucleotide-binding</keyword>
<dbReference type="EMBL" id="AE006914">
    <property type="protein sequence ID" value="AAL02972.1"/>
    <property type="molecule type" value="Genomic_DNA"/>
</dbReference>
<dbReference type="PIR" id="B97754">
    <property type="entry name" value="B97754"/>
</dbReference>
<dbReference type="RefSeq" id="WP_010977081.1">
    <property type="nucleotide sequence ID" value="NC_003103.1"/>
</dbReference>
<dbReference type="SMR" id="Q92II6"/>
<dbReference type="GeneID" id="928671"/>
<dbReference type="KEGG" id="rco:RC0434"/>
<dbReference type="PATRIC" id="fig|272944.4.peg.491"/>
<dbReference type="HOGENOM" id="CLU_033123_0_0_5"/>
<dbReference type="Proteomes" id="UP000000816">
    <property type="component" value="Chromosome"/>
</dbReference>
<dbReference type="GO" id="GO:0009376">
    <property type="term" value="C:HslUV protease complex"/>
    <property type="evidence" value="ECO:0007669"/>
    <property type="project" value="UniProtKB-UniRule"/>
</dbReference>
<dbReference type="GO" id="GO:0005524">
    <property type="term" value="F:ATP binding"/>
    <property type="evidence" value="ECO:0007669"/>
    <property type="project" value="UniProtKB-UniRule"/>
</dbReference>
<dbReference type="GO" id="GO:0016887">
    <property type="term" value="F:ATP hydrolysis activity"/>
    <property type="evidence" value="ECO:0007669"/>
    <property type="project" value="InterPro"/>
</dbReference>
<dbReference type="GO" id="GO:0003677">
    <property type="term" value="F:DNA binding"/>
    <property type="evidence" value="ECO:0007669"/>
    <property type="project" value="InterPro"/>
</dbReference>
<dbReference type="GO" id="GO:0008233">
    <property type="term" value="F:peptidase activity"/>
    <property type="evidence" value="ECO:0007669"/>
    <property type="project" value="InterPro"/>
</dbReference>
<dbReference type="GO" id="GO:0036402">
    <property type="term" value="F:proteasome-activating activity"/>
    <property type="evidence" value="ECO:0007669"/>
    <property type="project" value="UniProtKB-UniRule"/>
</dbReference>
<dbReference type="GO" id="GO:0043335">
    <property type="term" value="P:protein unfolding"/>
    <property type="evidence" value="ECO:0007669"/>
    <property type="project" value="UniProtKB-UniRule"/>
</dbReference>
<dbReference type="GO" id="GO:0051603">
    <property type="term" value="P:proteolysis involved in protein catabolic process"/>
    <property type="evidence" value="ECO:0007669"/>
    <property type="project" value="TreeGrafter"/>
</dbReference>
<dbReference type="CDD" id="cd19498">
    <property type="entry name" value="RecA-like_HslU"/>
    <property type="match status" value="1"/>
</dbReference>
<dbReference type="FunFam" id="3.40.50.300:FF:000213">
    <property type="entry name" value="ATP-dependent protease ATPase subunit HslU"/>
    <property type="match status" value="1"/>
</dbReference>
<dbReference type="Gene3D" id="1.10.8.60">
    <property type="match status" value="1"/>
</dbReference>
<dbReference type="Gene3D" id="3.40.50.300">
    <property type="entry name" value="P-loop containing nucleotide triphosphate hydrolases"/>
    <property type="match status" value="2"/>
</dbReference>
<dbReference type="HAMAP" id="MF_00249">
    <property type="entry name" value="HslU"/>
    <property type="match status" value="1"/>
</dbReference>
<dbReference type="InterPro" id="IPR003593">
    <property type="entry name" value="AAA+_ATPase"/>
</dbReference>
<dbReference type="InterPro" id="IPR050052">
    <property type="entry name" value="ATP-dep_Clp_protease_ClpX"/>
</dbReference>
<dbReference type="InterPro" id="IPR003959">
    <property type="entry name" value="ATPase_AAA_core"/>
</dbReference>
<dbReference type="InterPro" id="IPR019489">
    <property type="entry name" value="Clp_ATPase_C"/>
</dbReference>
<dbReference type="InterPro" id="IPR004491">
    <property type="entry name" value="HslU"/>
</dbReference>
<dbReference type="InterPro" id="IPR001208">
    <property type="entry name" value="MCM_dom"/>
</dbReference>
<dbReference type="InterPro" id="IPR027417">
    <property type="entry name" value="P-loop_NTPase"/>
</dbReference>
<dbReference type="NCBIfam" id="TIGR00390">
    <property type="entry name" value="hslU"/>
    <property type="match status" value="1"/>
</dbReference>
<dbReference type="NCBIfam" id="NF003544">
    <property type="entry name" value="PRK05201.1"/>
    <property type="match status" value="1"/>
</dbReference>
<dbReference type="PANTHER" id="PTHR48102">
    <property type="entry name" value="ATP-DEPENDENT CLP PROTEASE ATP-BINDING SUBUNIT CLPX-LIKE, MITOCHONDRIAL-RELATED"/>
    <property type="match status" value="1"/>
</dbReference>
<dbReference type="PANTHER" id="PTHR48102:SF3">
    <property type="entry name" value="ATP-DEPENDENT PROTEASE ATPASE SUBUNIT HSLU"/>
    <property type="match status" value="1"/>
</dbReference>
<dbReference type="Pfam" id="PF07724">
    <property type="entry name" value="AAA_2"/>
    <property type="match status" value="1"/>
</dbReference>
<dbReference type="Pfam" id="PF00493">
    <property type="entry name" value="MCM"/>
    <property type="match status" value="1"/>
</dbReference>
<dbReference type="SMART" id="SM00382">
    <property type="entry name" value="AAA"/>
    <property type="match status" value="1"/>
</dbReference>
<dbReference type="SMART" id="SM01086">
    <property type="entry name" value="ClpB_D2-small"/>
    <property type="match status" value="1"/>
</dbReference>
<dbReference type="SUPFAM" id="SSF52540">
    <property type="entry name" value="P-loop containing nucleoside triphosphate hydrolases"/>
    <property type="match status" value="1"/>
</dbReference>
<gene>
    <name evidence="1" type="primary">hslU</name>
    <name type="ordered locus">RC0434</name>
</gene>
<name>HSLU_RICCN</name>
<proteinExistence type="inferred from homology"/>
<comment type="function">
    <text evidence="1">ATPase subunit of a proteasome-like degradation complex; this subunit has chaperone activity. The binding of ATP and its subsequent hydrolysis by HslU are essential for unfolding of protein substrates subsequently hydrolyzed by HslV. HslU recognizes the N-terminal part of its protein substrates and unfolds these before they are guided to HslV for hydrolysis.</text>
</comment>
<comment type="subunit">
    <text evidence="1">A double ring-shaped homohexamer of HslV is capped on each side by a ring-shaped HslU homohexamer. The assembly of the HslU/HslV complex is dependent on binding of ATP.</text>
</comment>
<comment type="subcellular location">
    <subcellularLocation>
        <location evidence="1">Cytoplasm</location>
    </subcellularLocation>
</comment>
<comment type="similarity">
    <text evidence="1">Belongs to the ClpX chaperone family. HslU subfamily.</text>
</comment>
<protein>
    <recommendedName>
        <fullName evidence="1">ATP-dependent protease ATPase subunit HslU</fullName>
    </recommendedName>
    <alternativeName>
        <fullName evidence="1">Unfoldase HslU</fullName>
    </alternativeName>
</protein>
<reference key="1">
    <citation type="journal article" date="2001" name="Science">
        <title>Mechanisms of evolution in Rickettsia conorii and R. prowazekii.</title>
        <authorList>
            <person name="Ogata H."/>
            <person name="Audic S."/>
            <person name="Renesto-Audiffren P."/>
            <person name="Fournier P.-E."/>
            <person name="Barbe V."/>
            <person name="Samson D."/>
            <person name="Roux V."/>
            <person name="Cossart P."/>
            <person name="Weissenbach J."/>
            <person name="Claverie J.-M."/>
            <person name="Raoult D."/>
        </authorList>
    </citation>
    <scope>NUCLEOTIDE SEQUENCE [LARGE SCALE GENOMIC DNA]</scope>
    <source>
        <strain>ATCC VR-613 / Malish 7</strain>
    </source>
</reference>
<accession>Q92II6</accession>
<organism>
    <name type="scientific">Rickettsia conorii (strain ATCC VR-613 / Malish 7)</name>
    <dbReference type="NCBI Taxonomy" id="272944"/>
    <lineage>
        <taxon>Bacteria</taxon>
        <taxon>Pseudomonadati</taxon>
        <taxon>Pseudomonadota</taxon>
        <taxon>Alphaproteobacteria</taxon>
        <taxon>Rickettsiales</taxon>
        <taxon>Rickettsiaceae</taxon>
        <taxon>Rickettsieae</taxon>
        <taxon>Rickettsia</taxon>
        <taxon>spotted fever group</taxon>
    </lineage>
</organism>
<sequence length="450" mass="49592">MKATKTTYKKDPMGLTPSQIVNELNRFIVGQEKAKKAVAIALRNRCRRKRVEGNLRNEIVPKNILMIGSTGVGKTEIARRLAKLTNSPFYKIEATKFTEVGYVGRDVESIIRDLVEIAVNTEKTLAKTKVDIHAREKAIERILDSLVGKTSSSETREKFKEKILNGELDDKEIEISVADTTPVGGGSFEIPGMPGASMGVLNLGDMIGRALGSSKTKTKKMLVKDAMAIIIPEESEKLIDQEKIIQQAINLAENDGIVFIDEIDKIASTGSSGAKNAEISREGVQRDLLPLIEGTTVNTKYGPVKTDHILFIASGAFHIAKPSDLLPELQGRLPIRVELNSLTKDDMIKILLEPETSLIKQYSALIGTEDVHLEFAASAIEKIADYAITVNLEVEDIGARRLHTILENLLEDISFEASEMKGKKITIDDKFVENQLSKIITNLDLAKFVL</sequence>
<feature type="chain" id="PRO_0000160538" description="ATP-dependent protease ATPase subunit HslU">
    <location>
        <begin position="1"/>
        <end position="450"/>
    </location>
</feature>
<feature type="binding site" evidence="1">
    <location>
        <position position="29"/>
    </location>
    <ligand>
        <name>ATP</name>
        <dbReference type="ChEBI" id="CHEBI:30616"/>
    </ligand>
</feature>
<feature type="binding site" evidence="1">
    <location>
        <begin position="71"/>
        <end position="76"/>
    </location>
    <ligand>
        <name>ATP</name>
        <dbReference type="ChEBI" id="CHEBI:30616"/>
    </ligand>
</feature>
<feature type="binding site" evidence="1">
    <location>
        <position position="261"/>
    </location>
    <ligand>
        <name>ATP</name>
        <dbReference type="ChEBI" id="CHEBI:30616"/>
    </ligand>
</feature>
<feature type="binding site" evidence="1">
    <location>
        <position position="328"/>
    </location>
    <ligand>
        <name>ATP</name>
        <dbReference type="ChEBI" id="CHEBI:30616"/>
    </ligand>
</feature>
<feature type="binding site" evidence="1">
    <location>
        <position position="400"/>
    </location>
    <ligand>
        <name>ATP</name>
        <dbReference type="ChEBI" id="CHEBI:30616"/>
    </ligand>
</feature>